<proteinExistence type="inferred from homology"/>
<evidence type="ECO:0000255" key="1">
    <source>
        <dbReference type="HAMAP-Rule" id="MF_01454"/>
    </source>
</evidence>
<evidence type="ECO:0000255" key="2">
    <source>
        <dbReference type="PROSITE-ProRule" id="PRU01231"/>
    </source>
</evidence>
<sequence length="391" mass="43140">MKFIDEALIRVEAGDGGNGCVSFRREKYIPKGGPDGGDGGDGGDVYLIADENLNTLIDYRFEKRYAAGRGENGRSAGCTGHRGNDITLRVPVGTRAIDNDTQEVIGDLTKHGMKMLVAKGGYHGLGNTRFKSSVNRAPRQKTNGTPGEKRDLLLELMLLADVGMLGLPNAGKSTFIRAVSAAKPKVADYPFTTLVPSLGVARVGADRSFVVADIPGLIEGAADGAGLGIRFLKHLERCRVLIHLVDIMPIDESDPAQNISVIESELYQYSEKLSEKPTWLVFNKIDTIGEEEAQARAQEIAEQIGWEGDYYLISAATGQNVQNLTRDIMDFIEANPREVAEENTEADEVKFKWDDYHQQAMQNPIEEDWDDFDDDWSEEDEEGVEFVYTRS</sequence>
<gene>
    <name evidence="1" type="primary">obg</name>
    <name type="ordered locus">APJL_0041</name>
</gene>
<accession>B0BRJ9</accession>
<comment type="function">
    <text evidence="1">An essential GTPase which binds GTP, GDP and possibly (p)ppGpp with moderate affinity, with high nucleotide exchange rates and a fairly low GTP hydrolysis rate. Plays a role in control of the cell cycle, stress response, ribosome biogenesis and in those bacteria that undergo differentiation, in morphogenesis control.</text>
</comment>
<comment type="cofactor">
    <cofactor evidence="1">
        <name>Mg(2+)</name>
        <dbReference type="ChEBI" id="CHEBI:18420"/>
    </cofactor>
</comment>
<comment type="subunit">
    <text evidence="1">Monomer.</text>
</comment>
<comment type="subcellular location">
    <subcellularLocation>
        <location evidence="1">Cytoplasm</location>
    </subcellularLocation>
</comment>
<comment type="similarity">
    <text evidence="1">Belongs to the TRAFAC class OBG-HflX-like GTPase superfamily. OBG GTPase family.</text>
</comment>
<protein>
    <recommendedName>
        <fullName evidence="1">GTPase Obg</fullName>
        <ecNumber evidence="1">3.6.5.-</ecNumber>
    </recommendedName>
    <alternativeName>
        <fullName evidence="1">GTP-binding protein Obg</fullName>
    </alternativeName>
</protein>
<name>OBG_ACTPJ</name>
<keyword id="KW-0963">Cytoplasm</keyword>
<keyword id="KW-0342">GTP-binding</keyword>
<keyword id="KW-0378">Hydrolase</keyword>
<keyword id="KW-0460">Magnesium</keyword>
<keyword id="KW-0479">Metal-binding</keyword>
<keyword id="KW-0547">Nucleotide-binding</keyword>
<reference key="1">
    <citation type="journal article" date="2008" name="PLoS ONE">
        <title>Genome biology of Actinobacillus pleuropneumoniae JL03, an isolate of serotype 3 prevalent in China.</title>
        <authorList>
            <person name="Xu Z."/>
            <person name="Zhou Y."/>
            <person name="Li L."/>
            <person name="Zhou R."/>
            <person name="Xiao S."/>
            <person name="Wan Y."/>
            <person name="Zhang S."/>
            <person name="Wang K."/>
            <person name="Li W."/>
            <person name="Li L."/>
            <person name="Jin H."/>
            <person name="Kang M."/>
            <person name="Dalai B."/>
            <person name="Li T."/>
            <person name="Liu L."/>
            <person name="Cheng Y."/>
            <person name="Zhang L."/>
            <person name="Xu T."/>
            <person name="Zheng H."/>
            <person name="Pu S."/>
            <person name="Wang B."/>
            <person name="Gu W."/>
            <person name="Zhang X.L."/>
            <person name="Zhu G.-F."/>
            <person name="Wang S."/>
            <person name="Zhao G.-P."/>
            <person name="Chen H."/>
        </authorList>
    </citation>
    <scope>NUCLEOTIDE SEQUENCE [LARGE SCALE GENOMIC DNA]</scope>
    <source>
        <strain>JL03</strain>
    </source>
</reference>
<dbReference type="EC" id="3.6.5.-" evidence="1"/>
<dbReference type="EMBL" id="CP000687">
    <property type="protein sequence ID" value="ABY68647.1"/>
    <property type="molecule type" value="Genomic_DNA"/>
</dbReference>
<dbReference type="SMR" id="B0BRJ9"/>
<dbReference type="KEGG" id="apj:APJL_0041"/>
<dbReference type="HOGENOM" id="CLU_011747_2_0_6"/>
<dbReference type="Proteomes" id="UP000008547">
    <property type="component" value="Chromosome"/>
</dbReference>
<dbReference type="GO" id="GO:0005737">
    <property type="term" value="C:cytoplasm"/>
    <property type="evidence" value="ECO:0007669"/>
    <property type="project" value="UniProtKB-SubCell"/>
</dbReference>
<dbReference type="GO" id="GO:0005525">
    <property type="term" value="F:GTP binding"/>
    <property type="evidence" value="ECO:0007669"/>
    <property type="project" value="UniProtKB-UniRule"/>
</dbReference>
<dbReference type="GO" id="GO:0003924">
    <property type="term" value="F:GTPase activity"/>
    <property type="evidence" value="ECO:0007669"/>
    <property type="project" value="UniProtKB-UniRule"/>
</dbReference>
<dbReference type="GO" id="GO:0000287">
    <property type="term" value="F:magnesium ion binding"/>
    <property type="evidence" value="ECO:0007669"/>
    <property type="project" value="InterPro"/>
</dbReference>
<dbReference type="GO" id="GO:0042254">
    <property type="term" value="P:ribosome biogenesis"/>
    <property type="evidence" value="ECO:0007669"/>
    <property type="project" value="UniProtKB-UniRule"/>
</dbReference>
<dbReference type="CDD" id="cd01898">
    <property type="entry name" value="Obg"/>
    <property type="match status" value="1"/>
</dbReference>
<dbReference type="FunFam" id="2.70.210.12:FF:000001">
    <property type="entry name" value="GTPase Obg"/>
    <property type="match status" value="1"/>
</dbReference>
<dbReference type="Gene3D" id="2.70.210.12">
    <property type="entry name" value="GTP1/OBG domain"/>
    <property type="match status" value="1"/>
</dbReference>
<dbReference type="Gene3D" id="3.40.50.300">
    <property type="entry name" value="P-loop containing nucleotide triphosphate hydrolases"/>
    <property type="match status" value="1"/>
</dbReference>
<dbReference type="HAMAP" id="MF_01454">
    <property type="entry name" value="GTPase_Obg"/>
    <property type="match status" value="1"/>
</dbReference>
<dbReference type="InterPro" id="IPR031167">
    <property type="entry name" value="G_OBG"/>
</dbReference>
<dbReference type="InterPro" id="IPR006073">
    <property type="entry name" value="GTP-bd"/>
</dbReference>
<dbReference type="InterPro" id="IPR014100">
    <property type="entry name" value="GTP-bd_Obg/CgtA"/>
</dbReference>
<dbReference type="InterPro" id="IPR006074">
    <property type="entry name" value="GTP1-OBG_CS"/>
</dbReference>
<dbReference type="InterPro" id="IPR006169">
    <property type="entry name" value="GTP1_OBG_dom"/>
</dbReference>
<dbReference type="InterPro" id="IPR036726">
    <property type="entry name" value="GTP1_OBG_dom_sf"/>
</dbReference>
<dbReference type="InterPro" id="IPR045086">
    <property type="entry name" value="OBG_GTPase"/>
</dbReference>
<dbReference type="InterPro" id="IPR027417">
    <property type="entry name" value="P-loop_NTPase"/>
</dbReference>
<dbReference type="NCBIfam" id="TIGR02729">
    <property type="entry name" value="Obg_CgtA"/>
    <property type="match status" value="1"/>
</dbReference>
<dbReference type="NCBIfam" id="NF008955">
    <property type="entry name" value="PRK12297.1"/>
    <property type="match status" value="1"/>
</dbReference>
<dbReference type="NCBIfam" id="NF008956">
    <property type="entry name" value="PRK12299.1"/>
    <property type="match status" value="1"/>
</dbReference>
<dbReference type="PANTHER" id="PTHR11702">
    <property type="entry name" value="DEVELOPMENTALLY REGULATED GTP-BINDING PROTEIN-RELATED"/>
    <property type="match status" value="1"/>
</dbReference>
<dbReference type="PANTHER" id="PTHR11702:SF31">
    <property type="entry name" value="MITOCHONDRIAL RIBOSOME-ASSOCIATED GTPASE 2"/>
    <property type="match status" value="1"/>
</dbReference>
<dbReference type="Pfam" id="PF01018">
    <property type="entry name" value="GTP1_OBG"/>
    <property type="match status" value="1"/>
</dbReference>
<dbReference type="Pfam" id="PF01926">
    <property type="entry name" value="MMR_HSR1"/>
    <property type="match status" value="1"/>
</dbReference>
<dbReference type="PIRSF" id="PIRSF002401">
    <property type="entry name" value="GTP_bd_Obg/CgtA"/>
    <property type="match status" value="1"/>
</dbReference>
<dbReference type="PRINTS" id="PR00326">
    <property type="entry name" value="GTP1OBG"/>
</dbReference>
<dbReference type="SUPFAM" id="SSF82051">
    <property type="entry name" value="Obg GTP-binding protein N-terminal domain"/>
    <property type="match status" value="1"/>
</dbReference>
<dbReference type="SUPFAM" id="SSF52540">
    <property type="entry name" value="P-loop containing nucleoside triphosphate hydrolases"/>
    <property type="match status" value="1"/>
</dbReference>
<dbReference type="PROSITE" id="PS51710">
    <property type="entry name" value="G_OBG"/>
    <property type="match status" value="1"/>
</dbReference>
<dbReference type="PROSITE" id="PS00905">
    <property type="entry name" value="GTP1_OBG"/>
    <property type="match status" value="1"/>
</dbReference>
<dbReference type="PROSITE" id="PS51883">
    <property type="entry name" value="OBG"/>
    <property type="match status" value="1"/>
</dbReference>
<organism>
    <name type="scientific">Actinobacillus pleuropneumoniae serotype 3 (strain JL03)</name>
    <dbReference type="NCBI Taxonomy" id="434271"/>
    <lineage>
        <taxon>Bacteria</taxon>
        <taxon>Pseudomonadati</taxon>
        <taxon>Pseudomonadota</taxon>
        <taxon>Gammaproteobacteria</taxon>
        <taxon>Pasteurellales</taxon>
        <taxon>Pasteurellaceae</taxon>
        <taxon>Actinobacillus</taxon>
    </lineage>
</organism>
<feature type="chain" id="PRO_0000385672" description="GTPase Obg">
    <location>
        <begin position="1"/>
        <end position="391"/>
    </location>
</feature>
<feature type="domain" description="Obg" evidence="2">
    <location>
        <begin position="1"/>
        <end position="159"/>
    </location>
</feature>
<feature type="domain" description="OBG-type G" evidence="1">
    <location>
        <begin position="160"/>
        <end position="333"/>
    </location>
</feature>
<feature type="binding site" evidence="1">
    <location>
        <begin position="166"/>
        <end position="173"/>
    </location>
    <ligand>
        <name>GTP</name>
        <dbReference type="ChEBI" id="CHEBI:37565"/>
    </ligand>
</feature>
<feature type="binding site" evidence="1">
    <location>
        <position position="173"/>
    </location>
    <ligand>
        <name>Mg(2+)</name>
        <dbReference type="ChEBI" id="CHEBI:18420"/>
    </ligand>
</feature>
<feature type="binding site" evidence="1">
    <location>
        <begin position="191"/>
        <end position="195"/>
    </location>
    <ligand>
        <name>GTP</name>
        <dbReference type="ChEBI" id="CHEBI:37565"/>
    </ligand>
</feature>
<feature type="binding site" evidence="1">
    <location>
        <position position="193"/>
    </location>
    <ligand>
        <name>Mg(2+)</name>
        <dbReference type="ChEBI" id="CHEBI:18420"/>
    </ligand>
</feature>
<feature type="binding site" evidence="1">
    <location>
        <begin position="213"/>
        <end position="216"/>
    </location>
    <ligand>
        <name>GTP</name>
        <dbReference type="ChEBI" id="CHEBI:37565"/>
    </ligand>
</feature>
<feature type="binding site" evidence="1">
    <location>
        <begin position="283"/>
        <end position="286"/>
    </location>
    <ligand>
        <name>GTP</name>
        <dbReference type="ChEBI" id="CHEBI:37565"/>
    </ligand>
</feature>
<feature type="binding site" evidence="1">
    <location>
        <begin position="314"/>
        <end position="316"/>
    </location>
    <ligand>
        <name>GTP</name>
        <dbReference type="ChEBI" id="CHEBI:37565"/>
    </ligand>
</feature>